<gene>
    <name evidence="1" type="primary">glnS</name>
    <name type="ordered locus">YpAngola_A0326</name>
</gene>
<sequence length="555" mass="63751">MSEAEARPSNFIRQIIDEDLASGKHTSVHTRFPPEPNGYLHIGHAKSICLNFGIAEDYQGQCNLRFDDTNPVKEDVEFVESIKRDVEWLGFTWSGDVRYSSDYFDQLYQYAVELINKGLAYVDELTPEQMREYRGTLTAPGKNSPYRDRSVEENLALFEKMRAGGFAEGTACLRAKIDMASPFIVMRDPVLYRIKFAEHHQSGNKWCIYPMYDFTHCISDALEGITHSLCTLEFQDNRRLYDWVLDNISIDCHPRQYEFSRLNLEYTIMSKRKLNQLVTEKVVEGWDDPRMPTISGLRRRGYTAASIREFCRRIGVTKQDNNVEMMSLESCIRDDLNEHAPRAMAVLDPIKVVIENRAAGEEWLTMPNHPNNPEMGSRQVPFDSEIYIDRADFREEANKQYKRLVLGKEVRLRNAYVIKAERVEKDAEGNVTTLYCSYDAETLNKDPADGRKVKGVIHWVSVAHALPAEIRLYDRLFNVPNPAAAEDFLSTINPESLVIRQGFVEPSLADAVSDKTYQFEREGYFCADSRYSRPGALVFNRTVGLRDTWAAKATQ</sequence>
<reference key="1">
    <citation type="journal article" date="2010" name="J. Bacteriol.">
        <title>Genome sequence of the deep-rooted Yersinia pestis strain Angola reveals new insights into the evolution and pangenome of the plague bacterium.</title>
        <authorList>
            <person name="Eppinger M."/>
            <person name="Worsham P.L."/>
            <person name="Nikolich M.P."/>
            <person name="Riley D.R."/>
            <person name="Sebastian Y."/>
            <person name="Mou S."/>
            <person name="Achtman M."/>
            <person name="Lindler L.E."/>
            <person name="Ravel J."/>
        </authorList>
    </citation>
    <scope>NUCLEOTIDE SEQUENCE [LARGE SCALE GENOMIC DNA]</scope>
    <source>
        <strain>Angola</strain>
    </source>
</reference>
<dbReference type="EC" id="6.1.1.18" evidence="1"/>
<dbReference type="EMBL" id="CP000901">
    <property type="protein sequence ID" value="ABX84873.1"/>
    <property type="molecule type" value="Genomic_DNA"/>
</dbReference>
<dbReference type="RefSeq" id="WP_002210354.1">
    <property type="nucleotide sequence ID" value="NZ_CP009935.1"/>
</dbReference>
<dbReference type="SMR" id="A9R7G5"/>
<dbReference type="GeneID" id="57976061"/>
<dbReference type="KEGG" id="ypg:YpAngola_A0326"/>
<dbReference type="PATRIC" id="fig|349746.12.peg.1279"/>
<dbReference type="GO" id="GO:0005829">
    <property type="term" value="C:cytosol"/>
    <property type="evidence" value="ECO:0007669"/>
    <property type="project" value="TreeGrafter"/>
</dbReference>
<dbReference type="GO" id="GO:0005524">
    <property type="term" value="F:ATP binding"/>
    <property type="evidence" value="ECO:0007669"/>
    <property type="project" value="UniProtKB-UniRule"/>
</dbReference>
<dbReference type="GO" id="GO:0004819">
    <property type="term" value="F:glutamine-tRNA ligase activity"/>
    <property type="evidence" value="ECO:0007669"/>
    <property type="project" value="UniProtKB-UniRule"/>
</dbReference>
<dbReference type="GO" id="GO:0006425">
    <property type="term" value="P:glutaminyl-tRNA aminoacylation"/>
    <property type="evidence" value="ECO:0007669"/>
    <property type="project" value="InterPro"/>
</dbReference>
<dbReference type="GO" id="GO:0006424">
    <property type="term" value="P:glutamyl-tRNA aminoacylation"/>
    <property type="evidence" value="ECO:0007669"/>
    <property type="project" value="UniProtKB-UniRule"/>
</dbReference>
<dbReference type="CDD" id="cd00807">
    <property type="entry name" value="GlnRS_core"/>
    <property type="match status" value="1"/>
</dbReference>
<dbReference type="FunFam" id="1.10.1160.10:FF:000001">
    <property type="entry name" value="Glutamine--tRNA ligase"/>
    <property type="match status" value="1"/>
</dbReference>
<dbReference type="FunFam" id="2.40.240.10:FF:000001">
    <property type="entry name" value="Glutamine--tRNA ligase"/>
    <property type="match status" value="1"/>
</dbReference>
<dbReference type="FunFam" id="2.40.240.10:FF:000003">
    <property type="entry name" value="Glutamine--tRNA ligase"/>
    <property type="match status" value="1"/>
</dbReference>
<dbReference type="FunFam" id="3.90.800.10:FF:000001">
    <property type="entry name" value="Glutamine--tRNA ligase"/>
    <property type="match status" value="1"/>
</dbReference>
<dbReference type="FunFam" id="3.40.50.620:FF:000037">
    <property type="entry name" value="Glutamine--tRNA ligase cytoplasmic"/>
    <property type="match status" value="1"/>
</dbReference>
<dbReference type="Gene3D" id="1.10.1160.10">
    <property type="entry name" value="Glutamyl-trna Synthetase, Domain 2"/>
    <property type="match status" value="1"/>
</dbReference>
<dbReference type="Gene3D" id="3.90.800.10">
    <property type="entry name" value="Glutamyl-tRNA Synthetase, Domain 3"/>
    <property type="match status" value="1"/>
</dbReference>
<dbReference type="Gene3D" id="3.40.50.620">
    <property type="entry name" value="HUPs"/>
    <property type="match status" value="1"/>
</dbReference>
<dbReference type="Gene3D" id="2.40.240.10">
    <property type="entry name" value="Ribosomal Protein L25, Chain P"/>
    <property type="match status" value="2"/>
</dbReference>
<dbReference type="HAMAP" id="MF_00126">
    <property type="entry name" value="Gln_tRNA_synth"/>
    <property type="match status" value="1"/>
</dbReference>
<dbReference type="InterPro" id="IPR001412">
    <property type="entry name" value="aa-tRNA-synth_I_CS"/>
</dbReference>
<dbReference type="InterPro" id="IPR004514">
    <property type="entry name" value="Gln-tRNA-synth"/>
</dbReference>
<dbReference type="InterPro" id="IPR050132">
    <property type="entry name" value="Gln/Glu-tRNA_Ligase"/>
</dbReference>
<dbReference type="InterPro" id="IPR022861">
    <property type="entry name" value="Gln_tRNA_ligase_bac"/>
</dbReference>
<dbReference type="InterPro" id="IPR000924">
    <property type="entry name" value="Glu/Gln-tRNA-synth"/>
</dbReference>
<dbReference type="InterPro" id="IPR020058">
    <property type="entry name" value="Glu/Gln-tRNA-synth_Ib_cat-dom"/>
</dbReference>
<dbReference type="InterPro" id="IPR020059">
    <property type="entry name" value="Glu/Gln-tRNA-synth_Ib_codon-bd"/>
</dbReference>
<dbReference type="InterPro" id="IPR020061">
    <property type="entry name" value="Glu_tRNA_lig_a-bdl"/>
</dbReference>
<dbReference type="InterPro" id="IPR020056">
    <property type="entry name" value="Rbsml_bL25/Gln-tRNA_synth_N"/>
</dbReference>
<dbReference type="InterPro" id="IPR011035">
    <property type="entry name" value="Ribosomal_bL25/Gln-tRNA_synth"/>
</dbReference>
<dbReference type="InterPro" id="IPR014729">
    <property type="entry name" value="Rossmann-like_a/b/a_fold"/>
</dbReference>
<dbReference type="InterPro" id="IPR049437">
    <property type="entry name" value="tRNA-synt_1c_C2"/>
</dbReference>
<dbReference type="NCBIfam" id="TIGR00440">
    <property type="entry name" value="glnS"/>
    <property type="match status" value="1"/>
</dbReference>
<dbReference type="NCBIfam" id="NF011291">
    <property type="entry name" value="PRK14703.1"/>
    <property type="match status" value="1"/>
</dbReference>
<dbReference type="PANTHER" id="PTHR43097:SF5">
    <property type="entry name" value="GLUTAMATE--TRNA LIGASE"/>
    <property type="match status" value="1"/>
</dbReference>
<dbReference type="PANTHER" id="PTHR43097">
    <property type="entry name" value="GLUTAMINE-TRNA LIGASE"/>
    <property type="match status" value="1"/>
</dbReference>
<dbReference type="Pfam" id="PF00749">
    <property type="entry name" value="tRNA-synt_1c"/>
    <property type="match status" value="1"/>
</dbReference>
<dbReference type="Pfam" id="PF03950">
    <property type="entry name" value="tRNA-synt_1c_C"/>
    <property type="match status" value="1"/>
</dbReference>
<dbReference type="Pfam" id="PF20974">
    <property type="entry name" value="tRNA-synt_1c_C2"/>
    <property type="match status" value="1"/>
</dbReference>
<dbReference type="PRINTS" id="PR00987">
    <property type="entry name" value="TRNASYNTHGLU"/>
</dbReference>
<dbReference type="SUPFAM" id="SSF52374">
    <property type="entry name" value="Nucleotidylyl transferase"/>
    <property type="match status" value="1"/>
</dbReference>
<dbReference type="SUPFAM" id="SSF50715">
    <property type="entry name" value="Ribosomal protein L25-like"/>
    <property type="match status" value="1"/>
</dbReference>
<dbReference type="PROSITE" id="PS00178">
    <property type="entry name" value="AA_TRNA_LIGASE_I"/>
    <property type="match status" value="1"/>
</dbReference>
<feature type="chain" id="PRO_1000095520" description="Glutamine--tRNA ligase">
    <location>
        <begin position="1"/>
        <end position="555"/>
    </location>
</feature>
<feature type="short sequence motif" description="'HIGH' region" evidence="1">
    <location>
        <begin position="34"/>
        <end position="44"/>
    </location>
</feature>
<feature type="short sequence motif" description="'KMSKS' region" evidence="1">
    <location>
        <begin position="268"/>
        <end position="272"/>
    </location>
</feature>
<feature type="binding site" evidence="1">
    <location>
        <begin position="35"/>
        <end position="37"/>
    </location>
    <ligand>
        <name>ATP</name>
        <dbReference type="ChEBI" id="CHEBI:30616"/>
    </ligand>
</feature>
<feature type="binding site" evidence="1">
    <location>
        <begin position="41"/>
        <end position="47"/>
    </location>
    <ligand>
        <name>ATP</name>
        <dbReference type="ChEBI" id="CHEBI:30616"/>
    </ligand>
</feature>
<feature type="binding site" evidence="1">
    <location>
        <position position="67"/>
    </location>
    <ligand>
        <name>L-glutamine</name>
        <dbReference type="ChEBI" id="CHEBI:58359"/>
    </ligand>
</feature>
<feature type="binding site" evidence="1">
    <location>
        <position position="212"/>
    </location>
    <ligand>
        <name>L-glutamine</name>
        <dbReference type="ChEBI" id="CHEBI:58359"/>
    </ligand>
</feature>
<feature type="binding site" evidence="1">
    <location>
        <position position="231"/>
    </location>
    <ligand>
        <name>ATP</name>
        <dbReference type="ChEBI" id="CHEBI:30616"/>
    </ligand>
</feature>
<feature type="binding site" evidence="1">
    <location>
        <begin position="261"/>
        <end position="262"/>
    </location>
    <ligand>
        <name>ATP</name>
        <dbReference type="ChEBI" id="CHEBI:30616"/>
    </ligand>
</feature>
<feature type="binding site" evidence="1">
    <location>
        <begin position="269"/>
        <end position="271"/>
    </location>
    <ligand>
        <name>ATP</name>
        <dbReference type="ChEBI" id="CHEBI:30616"/>
    </ligand>
</feature>
<proteinExistence type="inferred from homology"/>
<protein>
    <recommendedName>
        <fullName evidence="1">Glutamine--tRNA ligase</fullName>
        <ecNumber evidence="1">6.1.1.18</ecNumber>
    </recommendedName>
    <alternativeName>
        <fullName evidence="1">Glutaminyl-tRNA synthetase</fullName>
        <shortName evidence="1">GlnRS</shortName>
    </alternativeName>
</protein>
<keyword id="KW-0030">Aminoacyl-tRNA synthetase</keyword>
<keyword id="KW-0067">ATP-binding</keyword>
<keyword id="KW-0963">Cytoplasm</keyword>
<keyword id="KW-0436">Ligase</keyword>
<keyword id="KW-0547">Nucleotide-binding</keyword>
<keyword id="KW-0648">Protein biosynthesis</keyword>
<accession>A9R7G5</accession>
<comment type="catalytic activity">
    <reaction evidence="1">
        <text>tRNA(Gln) + L-glutamine + ATP = L-glutaminyl-tRNA(Gln) + AMP + diphosphate</text>
        <dbReference type="Rhea" id="RHEA:20121"/>
        <dbReference type="Rhea" id="RHEA-COMP:9662"/>
        <dbReference type="Rhea" id="RHEA-COMP:9681"/>
        <dbReference type="ChEBI" id="CHEBI:30616"/>
        <dbReference type="ChEBI" id="CHEBI:33019"/>
        <dbReference type="ChEBI" id="CHEBI:58359"/>
        <dbReference type="ChEBI" id="CHEBI:78442"/>
        <dbReference type="ChEBI" id="CHEBI:78521"/>
        <dbReference type="ChEBI" id="CHEBI:456215"/>
        <dbReference type="EC" id="6.1.1.18"/>
    </reaction>
</comment>
<comment type="subunit">
    <text evidence="1">Monomer.</text>
</comment>
<comment type="subcellular location">
    <subcellularLocation>
        <location evidence="1">Cytoplasm</location>
    </subcellularLocation>
</comment>
<comment type="similarity">
    <text evidence="1">Belongs to the class-I aminoacyl-tRNA synthetase family.</text>
</comment>
<name>SYQ_YERPG</name>
<organism>
    <name type="scientific">Yersinia pestis bv. Antiqua (strain Angola)</name>
    <dbReference type="NCBI Taxonomy" id="349746"/>
    <lineage>
        <taxon>Bacteria</taxon>
        <taxon>Pseudomonadati</taxon>
        <taxon>Pseudomonadota</taxon>
        <taxon>Gammaproteobacteria</taxon>
        <taxon>Enterobacterales</taxon>
        <taxon>Yersiniaceae</taxon>
        <taxon>Yersinia</taxon>
    </lineage>
</organism>
<evidence type="ECO:0000255" key="1">
    <source>
        <dbReference type="HAMAP-Rule" id="MF_00126"/>
    </source>
</evidence>